<dbReference type="EMBL" id="X05970">
    <property type="protein sequence ID" value="CAA29394.1"/>
    <property type="molecule type" value="Genomic_DNA"/>
</dbReference>
<dbReference type="PIR" id="B26850">
    <property type="entry name" value="B26850"/>
</dbReference>
<dbReference type="RefSeq" id="YP_009128397.1">
    <property type="nucleotide sequence ID" value="NC_026703.1"/>
</dbReference>
<dbReference type="SMR" id="P07138"/>
<dbReference type="GeneID" id="23764574"/>
<dbReference type="GO" id="GO:0009535">
    <property type="term" value="C:chloroplast thylakoid membrane"/>
    <property type="evidence" value="ECO:0007669"/>
    <property type="project" value="UniProtKB-SubCell"/>
</dbReference>
<dbReference type="GO" id="GO:0045259">
    <property type="term" value="C:proton-transporting ATP synthase complex"/>
    <property type="evidence" value="ECO:0007669"/>
    <property type="project" value="UniProtKB-KW"/>
</dbReference>
<dbReference type="GO" id="GO:0005524">
    <property type="term" value="F:ATP binding"/>
    <property type="evidence" value="ECO:0007669"/>
    <property type="project" value="UniProtKB-UniRule"/>
</dbReference>
<dbReference type="GO" id="GO:0046933">
    <property type="term" value="F:proton-transporting ATP synthase activity, rotational mechanism"/>
    <property type="evidence" value="ECO:0007669"/>
    <property type="project" value="UniProtKB-UniRule"/>
</dbReference>
<dbReference type="CDD" id="cd12152">
    <property type="entry name" value="F1-ATPase_delta"/>
    <property type="match status" value="1"/>
</dbReference>
<dbReference type="FunFam" id="2.60.15.10:FF:000002">
    <property type="entry name" value="ATP synthase epsilon chain, chloroplastic"/>
    <property type="match status" value="1"/>
</dbReference>
<dbReference type="Gene3D" id="6.10.140.480">
    <property type="match status" value="1"/>
</dbReference>
<dbReference type="Gene3D" id="2.60.15.10">
    <property type="entry name" value="F0F1 ATP synthase delta/epsilon subunit, N-terminal"/>
    <property type="match status" value="1"/>
</dbReference>
<dbReference type="HAMAP" id="MF_00530">
    <property type="entry name" value="ATP_synth_epsil_bac"/>
    <property type="match status" value="1"/>
</dbReference>
<dbReference type="InterPro" id="IPR001469">
    <property type="entry name" value="ATP_synth_F1_dsu/esu"/>
</dbReference>
<dbReference type="InterPro" id="IPR020546">
    <property type="entry name" value="ATP_synth_F1_dsu/esu_N"/>
</dbReference>
<dbReference type="InterPro" id="IPR020547">
    <property type="entry name" value="ATP_synth_F1_esu_C"/>
</dbReference>
<dbReference type="InterPro" id="IPR036771">
    <property type="entry name" value="ATPsynth_dsu/esu_N"/>
</dbReference>
<dbReference type="NCBIfam" id="TIGR01216">
    <property type="entry name" value="ATP_synt_epsi"/>
    <property type="match status" value="1"/>
</dbReference>
<dbReference type="PANTHER" id="PTHR13822">
    <property type="entry name" value="ATP SYNTHASE DELTA/EPSILON CHAIN"/>
    <property type="match status" value="1"/>
</dbReference>
<dbReference type="PANTHER" id="PTHR13822:SF10">
    <property type="entry name" value="ATP SYNTHASE EPSILON CHAIN, CHLOROPLASTIC"/>
    <property type="match status" value="1"/>
</dbReference>
<dbReference type="Pfam" id="PF00401">
    <property type="entry name" value="ATP-synt_DE"/>
    <property type="match status" value="1"/>
</dbReference>
<dbReference type="Pfam" id="PF02823">
    <property type="entry name" value="ATP-synt_DE_N"/>
    <property type="match status" value="1"/>
</dbReference>
<dbReference type="SUPFAM" id="SSF51344">
    <property type="entry name" value="Epsilon subunit of F1F0-ATP synthase N-terminal domain"/>
    <property type="match status" value="1"/>
</dbReference>
<keyword id="KW-0066">ATP synthesis</keyword>
<keyword id="KW-0139">CF(1)</keyword>
<keyword id="KW-0150">Chloroplast</keyword>
<keyword id="KW-0375">Hydrogen ion transport</keyword>
<keyword id="KW-0406">Ion transport</keyword>
<keyword id="KW-0472">Membrane</keyword>
<keyword id="KW-0934">Plastid</keyword>
<keyword id="KW-0793">Thylakoid</keyword>
<keyword id="KW-0813">Transport</keyword>
<feature type="chain" id="PRO_0000188270" description="ATP synthase epsilon chain, chloroplastic">
    <location>
        <begin position="1"/>
        <end position="133"/>
    </location>
</feature>
<organism>
    <name type="scientific">Ipomoea batatas</name>
    <name type="common">Sweet potato</name>
    <name type="synonym">Convolvulus batatas</name>
    <dbReference type="NCBI Taxonomy" id="4120"/>
    <lineage>
        <taxon>Eukaryota</taxon>
        <taxon>Viridiplantae</taxon>
        <taxon>Streptophyta</taxon>
        <taxon>Embryophyta</taxon>
        <taxon>Tracheophyta</taxon>
        <taxon>Spermatophyta</taxon>
        <taxon>Magnoliopsida</taxon>
        <taxon>eudicotyledons</taxon>
        <taxon>Gunneridae</taxon>
        <taxon>Pentapetalae</taxon>
        <taxon>asterids</taxon>
        <taxon>lamiids</taxon>
        <taxon>Solanales</taxon>
        <taxon>Convolvulaceae</taxon>
        <taxon>Ipomoeeae</taxon>
        <taxon>Ipomoea</taxon>
    </lineage>
</organism>
<evidence type="ECO:0000255" key="1">
    <source>
        <dbReference type="HAMAP-Rule" id="MF_00530"/>
    </source>
</evidence>
<reference key="1">
    <citation type="journal article" date="1987" name="Nucleic Acids Res.">
        <title>CF1ATPase beta- and epsilon-subunit genes are separated in the sweet potato chloroplast genome.</title>
        <authorList>
            <person name="Kobayashi K."/>
            <person name="Nakamura K."/>
            <person name="Asahi T."/>
        </authorList>
    </citation>
    <scope>NUCLEOTIDE SEQUENCE [GENOMIC DNA]</scope>
    <source>
        <strain>cv. Kokei No. 14</strain>
    </source>
</reference>
<comment type="function">
    <text evidence="1">Produces ATP from ADP in the presence of a proton gradient across the membrane.</text>
</comment>
<comment type="subunit">
    <text evidence="1">F-type ATPases have 2 components, CF(1) - the catalytic core - and CF(0) - the membrane proton channel. CF(1) has five subunits: alpha(3), beta(3), gamma(1), delta(1), epsilon(1). CF(0) has three main subunits: a, b and c.</text>
</comment>
<comment type="subcellular location">
    <subcellularLocation>
        <location evidence="1">Plastid</location>
        <location evidence="1">Chloroplast thylakoid membrane</location>
        <topology evidence="1">Peripheral membrane protein</topology>
    </subcellularLocation>
</comment>
<comment type="similarity">
    <text evidence="1">Belongs to the ATPase epsilon chain family.</text>
</comment>
<accession>P07138</accession>
<sequence>MTLKLCVLTPNRIVWDSEVKEIILSTNSGQIGILPNHAPIATAVDIGILRIRLNDQWVTMALMGGFARIGNNEITVLVNDAEKGSDIDSLEAQQTLEIAEANFRKAEGKRQTIEANLALRRARTRVEAINAIS</sequence>
<protein>
    <recommendedName>
        <fullName evidence="1">ATP synthase epsilon chain, chloroplastic</fullName>
    </recommendedName>
    <alternativeName>
        <fullName evidence="1">ATP synthase F1 sector epsilon subunit</fullName>
    </alternativeName>
    <alternativeName>
        <fullName evidence="1">F-ATPase epsilon subunit</fullName>
    </alternativeName>
</protein>
<gene>
    <name evidence="1" type="primary">atpE</name>
</gene>
<name>ATPE_IPOBA</name>
<proteinExistence type="inferred from homology"/>
<geneLocation type="chloroplast"/>